<reference key="1">
    <citation type="journal article" date="2001" name="Lancet">
        <title>Whole genome sequencing of meticillin-resistant Staphylococcus aureus.</title>
        <authorList>
            <person name="Kuroda M."/>
            <person name="Ohta T."/>
            <person name="Uchiyama I."/>
            <person name="Baba T."/>
            <person name="Yuzawa H."/>
            <person name="Kobayashi I."/>
            <person name="Cui L."/>
            <person name="Oguchi A."/>
            <person name="Aoki K."/>
            <person name="Nagai Y."/>
            <person name="Lian J.-Q."/>
            <person name="Ito T."/>
            <person name="Kanamori M."/>
            <person name="Matsumaru H."/>
            <person name="Maruyama A."/>
            <person name="Murakami H."/>
            <person name="Hosoyama A."/>
            <person name="Mizutani-Ui Y."/>
            <person name="Takahashi N.K."/>
            <person name="Sawano T."/>
            <person name="Inoue R."/>
            <person name="Kaito C."/>
            <person name="Sekimizu K."/>
            <person name="Hirakawa H."/>
            <person name="Kuhara S."/>
            <person name="Goto S."/>
            <person name="Yabuzaki J."/>
            <person name="Kanehisa M."/>
            <person name="Yamashita A."/>
            <person name="Oshima K."/>
            <person name="Furuya K."/>
            <person name="Yoshino C."/>
            <person name="Shiba T."/>
            <person name="Hattori M."/>
            <person name="Ogasawara N."/>
            <person name="Hayashi H."/>
            <person name="Hiramatsu K."/>
        </authorList>
    </citation>
    <scope>NUCLEOTIDE SEQUENCE [LARGE SCALE GENOMIC DNA]</scope>
    <source>
        <strain>Mu50 / ATCC 700699</strain>
    </source>
</reference>
<accession>P67358</accession>
<accession>Q99V05</accession>
<gene>
    <name type="ordered locus">SAV1097</name>
</gene>
<comment type="similarity">
    <text evidence="1">Belongs to the UPF0223 family.</text>
</comment>
<organism>
    <name type="scientific">Staphylococcus aureus (strain Mu50 / ATCC 700699)</name>
    <dbReference type="NCBI Taxonomy" id="158878"/>
    <lineage>
        <taxon>Bacteria</taxon>
        <taxon>Bacillati</taxon>
        <taxon>Bacillota</taxon>
        <taxon>Bacilli</taxon>
        <taxon>Bacillales</taxon>
        <taxon>Staphylococcaceae</taxon>
        <taxon>Staphylococcus</taxon>
    </lineage>
</organism>
<dbReference type="EMBL" id="BA000017">
    <property type="protein sequence ID" value="BAB57259.1"/>
    <property type="molecule type" value="Genomic_DNA"/>
</dbReference>
<dbReference type="RefSeq" id="WP_000455597.1">
    <property type="nucleotide sequence ID" value="NC_002758.2"/>
</dbReference>
<dbReference type="SMR" id="P67358"/>
<dbReference type="KEGG" id="sav:SAV1097"/>
<dbReference type="HOGENOM" id="CLU_166693_0_0_9"/>
<dbReference type="PhylomeDB" id="P67358"/>
<dbReference type="Proteomes" id="UP000002481">
    <property type="component" value="Chromosome"/>
</dbReference>
<dbReference type="Gene3D" id="1.10.220.80">
    <property type="entry name" value="BH2638-like"/>
    <property type="match status" value="1"/>
</dbReference>
<dbReference type="HAMAP" id="MF_01041">
    <property type="entry name" value="UPF0223"/>
    <property type="match status" value="1"/>
</dbReference>
<dbReference type="InterPro" id="IPR023324">
    <property type="entry name" value="BH2638-like_sf"/>
</dbReference>
<dbReference type="InterPro" id="IPR007920">
    <property type="entry name" value="UPF0223"/>
</dbReference>
<dbReference type="NCBIfam" id="NF003353">
    <property type="entry name" value="PRK04387.1"/>
    <property type="match status" value="1"/>
</dbReference>
<dbReference type="Pfam" id="PF05256">
    <property type="entry name" value="UPF0223"/>
    <property type="match status" value="1"/>
</dbReference>
<dbReference type="PIRSF" id="PIRSF037260">
    <property type="entry name" value="UPF0223"/>
    <property type="match status" value="1"/>
</dbReference>
<dbReference type="SUPFAM" id="SSF158504">
    <property type="entry name" value="BH2638-like"/>
    <property type="match status" value="1"/>
</dbReference>
<feature type="chain" id="PRO_0000216684" description="UPF0223 protein SAV1097">
    <location>
        <begin position="1"/>
        <end position="91"/>
    </location>
</feature>
<sequence length="91" mass="10692">MEYEYPIDLDWSNEEMISVINFFNHVEKYYESGVTAGDFMGAYKRFKEIVPAKAEEKQIFNTFEKSSGYNSYKAVQDVKTHSEEQRVTAKK</sequence>
<name>Y1097_STAAM</name>
<protein>
    <recommendedName>
        <fullName evidence="1">UPF0223 protein SAV1097</fullName>
    </recommendedName>
</protein>
<evidence type="ECO:0000255" key="1">
    <source>
        <dbReference type="HAMAP-Rule" id="MF_01041"/>
    </source>
</evidence>
<proteinExistence type="inferred from homology"/>